<name>SYGB_POLNA</name>
<feature type="chain" id="PRO_1000101315" description="Glycine--tRNA ligase beta subunit">
    <location>
        <begin position="1"/>
        <end position="711"/>
    </location>
</feature>
<sequence>MTTKNLLVELFVEELPPKALKKLGDAFAGVLAEQLKALGLATAESVVTAYASPRRLAAHISHVWLKADDKAVQQKLMPVSVGLDSAGHATPALLKRLQALGADLSDPVAAVAALKRAPDGKAEALFYNSLVTGATLDTGLQKALEEAIAKLPIPKVMSYQLETDCELPGWTSVNFVRPAHGLVALHGSTVVPVKVLGLKAGNSTRGHRFEAAVDPVVLADADSYAVTLEIDGAVIASFAQRKAEIARQLAEAAAELGGGVQPIEDDALLDEVTALVERPNVLVCEFEKEFLDVPQECLILTMKANQKYFPLLDAAGKLTNKFLVVSNISPEDASFVIGGNERVVRPRLADAKFFFDQDRKRTLASRVEGLGKVVYHNKLGTQGERTERVAEIAVKIAQLLEGDALAGKAGKAAWLAKADLLTDMVGEFPELQGTMGRYYALHDGHSAEIAAAIEDHYKPRFAGDELPRNPVGVVVALADKLETLVGMFGIGNLPTGDKDPFALRRHALGVIRMLVEKDLPLDLGALVGGAAPVFGDKITDATPALLDFIYDRLSGSLREQGYSAQEVDSVVSQKPQRLGDVPKRLAAVRAFAALPEAPALAAANKRIGNILKKEALEVDPHVSELLLREAAEIALYAAMRDVVPTANAQFDTGDYTASLQTLAALRAPVDAFFDGVMVNAEELDLRLNRQGLLKSLHNAMNRVADLSRLVA</sequence>
<accession>A1VJD8</accession>
<evidence type="ECO:0000255" key="1">
    <source>
        <dbReference type="HAMAP-Rule" id="MF_00255"/>
    </source>
</evidence>
<dbReference type="EC" id="6.1.1.14" evidence="1"/>
<dbReference type="EMBL" id="CP000529">
    <property type="protein sequence ID" value="ABM35766.1"/>
    <property type="molecule type" value="Genomic_DNA"/>
</dbReference>
<dbReference type="RefSeq" id="WP_011799866.1">
    <property type="nucleotide sequence ID" value="NC_008781.1"/>
</dbReference>
<dbReference type="SMR" id="A1VJD8"/>
<dbReference type="STRING" id="365044.Pnap_0444"/>
<dbReference type="KEGG" id="pna:Pnap_0444"/>
<dbReference type="eggNOG" id="COG0751">
    <property type="taxonomic scope" value="Bacteria"/>
</dbReference>
<dbReference type="HOGENOM" id="CLU_007220_2_2_4"/>
<dbReference type="OrthoDB" id="9775440at2"/>
<dbReference type="Proteomes" id="UP000000644">
    <property type="component" value="Chromosome"/>
</dbReference>
<dbReference type="GO" id="GO:0005829">
    <property type="term" value="C:cytosol"/>
    <property type="evidence" value="ECO:0007669"/>
    <property type="project" value="TreeGrafter"/>
</dbReference>
<dbReference type="GO" id="GO:0004814">
    <property type="term" value="F:arginine-tRNA ligase activity"/>
    <property type="evidence" value="ECO:0007669"/>
    <property type="project" value="InterPro"/>
</dbReference>
<dbReference type="GO" id="GO:0005524">
    <property type="term" value="F:ATP binding"/>
    <property type="evidence" value="ECO:0007669"/>
    <property type="project" value="UniProtKB-UniRule"/>
</dbReference>
<dbReference type="GO" id="GO:0004820">
    <property type="term" value="F:glycine-tRNA ligase activity"/>
    <property type="evidence" value="ECO:0007669"/>
    <property type="project" value="UniProtKB-UniRule"/>
</dbReference>
<dbReference type="GO" id="GO:0006420">
    <property type="term" value="P:arginyl-tRNA aminoacylation"/>
    <property type="evidence" value="ECO:0007669"/>
    <property type="project" value="InterPro"/>
</dbReference>
<dbReference type="GO" id="GO:0006426">
    <property type="term" value="P:glycyl-tRNA aminoacylation"/>
    <property type="evidence" value="ECO:0007669"/>
    <property type="project" value="UniProtKB-UniRule"/>
</dbReference>
<dbReference type="HAMAP" id="MF_00255">
    <property type="entry name" value="Gly_tRNA_synth_beta"/>
    <property type="match status" value="1"/>
</dbReference>
<dbReference type="InterPro" id="IPR008909">
    <property type="entry name" value="DALR_anticod-bd"/>
</dbReference>
<dbReference type="InterPro" id="IPR015944">
    <property type="entry name" value="Gly-tRNA-synth_bsu"/>
</dbReference>
<dbReference type="InterPro" id="IPR006194">
    <property type="entry name" value="Gly-tRNA-synth_heterodimer"/>
</dbReference>
<dbReference type="NCBIfam" id="TIGR00211">
    <property type="entry name" value="glyS"/>
    <property type="match status" value="1"/>
</dbReference>
<dbReference type="PANTHER" id="PTHR30075:SF2">
    <property type="entry name" value="GLYCINE--TRNA LIGASE, CHLOROPLASTIC_MITOCHONDRIAL 2"/>
    <property type="match status" value="1"/>
</dbReference>
<dbReference type="PANTHER" id="PTHR30075">
    <property type="entry name" value="GLYCYL-TRNA SYNTHETASE"/>
    <property type="match status" value="1"/>
</dbReference>
<dbReference type="Pfam" id="PF05746">
    <property type="entry name" value="DALR_1"/>
    <property type="match status" value="1"/>
</dbReference>
<dbReference type="Pfam" id="PF02092">
    <property type="entry name" value="tRNA_synt_2f"/>
    <property type="match status" value="1"/>
</dbReference>
<dbReference type="PRINTS" id="PR01045">
    <property type="entry name" value="TRNASYNTHGB"/>
</dbReference>
<dbReference type="SUPFAM" id="SSF109604">
    <property type="entry name" value="HD-domain/PDEase-like"/>
    <property type="match status" value="1"/>
</dbReference>
<dbReference type="PROSITE" id="PS50861">
    <property type="entry name" value="AA_TRNA_LIGASE_II_GLYAB"/>
    <property type="match status" value="1"/>
</dbReference>
<gene>
    <name evidence="1" type="primary">glyS</name>
    <name type="ordered locus">Pnap_0444</name>
</gene>
<proteinExistence type="inferred from homology"/>
<comment type="catalytic activity">
    <reaction evidence="1">
        <text>tRNA(Gly) + glycine + ATP = glycyl-tRNA(Gly) + AMP + diphosphate</text>
        <dbReference type="Rhea" id="RHEA:16013"/>
        <dbReference type="Rhea" id="RHEA-COMP:9664"/>
        <dbReference type="Rhea" id="RHEA-COMP:9683"/>
        <dbReference type="ChEBI" id="CHEBI:30616"/>
        <dbReference type="ChEBI" id="CHEBI:33019"/>
        <dbReference type="ChEBI" id="CHEBI:57305"/>
        <dbReference type="ChEBI" id="CHEBI:78442"/>
        <dbReference type="ChEBI" id="CHEBI:78522"/>
        <dbReference type="ChEBI" id="CHEBI:456215"/>
        <dbReference type="EC" id="6.1.1.14"/>
    </reaction>
</comment>
<comment type="subunit">
    <text evidence="1">Tetramer of two alpha and two beta subunits.</text>
</comment>
<comment type="subcellular location">
    <subcellularLocation>
        <location evidence="1">Cytoplasm</location>
    </subcellularLocation>
</comment>
<comment type="similarity">
    <text evidence="1">Belongs to the class-II aminoacyl-tRNA synthetase family.</text>
</comment>
<organism>
    <name type="scientific">Polaromonas naphthalenivorans (strain CJ2)</name>
    <dbReference type="NCBI Taxonomy" id="365044"/>
    <lineage>
        <taxon>Bacteria</taxon>
        <taxon>Pseudomonadati</taxon>
        <taxon>Pseudomonadota</taxon>
        <taxon>Betaproteobacteria</taxon>
        <taxon>Burkholderiales</taxon>
        <taxon>Comamonadaceae</taxon>
        <taxon>Polaromonas</taxon>
    </lineage>
</organism>
<keyword id="KW-0030">Aminoacyl-tRNA synthetase</keyword>
<keyword id="KW-0067">ATP-binding</keyword>
<keyword id="KW-0963">Cytoplasm</keyword>
<keyword id="KW-0436">Ligase</keyword>
<keyword id="KW-0547">Nucleotide-binding</keyword>
<keyword id="KW-0648">Protein biosynthesis</keyword>
<keyword id="KW-1185">Reference proteome</keyword>
<protein>
    <recommendedName>
        <fullName evidence="1">Glycine--tRNA ligase beta subunit</fullName>
        <ecNumber evidence="1">6.1.1.14</ecNumber>
    </recommendedName>
    <alternativeName>
        <fullName evidence="1">Glycyl-tRNA synthetase beta subunit</fullName>
        <shortName evidence="1">GlyRS</shortName>
    </alternativeName>
</protein>
<reference key="1">
    <citation type="journal article" date="2009" name="Environ. Microbiol.">
        <title>The genome of Polaromonas naphthalenivorans strain CJ2, isolated from coal tar-contaminated sediment, reveals physiological and metabolic versatility and evolution through extensive horizontal gene transfer.</title>
        <authorList>
            <person name="Yagi J.M."/>
            <person name="Sims D."/>
            <person name="Brettin T."/>
            <person name="Bruce D."/>
            <person name="Madsen E.L."/>
        </authorList>
    </citation>
    <scope>NUCLEOTIDE SEQUENCE [LARGE SCALE GENOMIC DNA]</scope>
    <source>
        <strain>CJ2</strain>
    </source>
</reference>